<evidence type="ECO:0000250" key="1"/>
<evidence type="ECO:0000255" key="2"/>
<evidence type="ECO:0000256" key="3">
    <source>
        <dbReference type="SAM" id="MobiDB-lite"/>
    </source>
</evidence>
<evidence type="ECO:0000305" key="4"/>
<dbReference type="EMBL" id="M58547">
    <property type="protein sequence ID" value="AAA29720.1"/>
    <property type="molecule type" value="Genomic_DNA"/>
</dbReference>
<dbReference type="BMRB" id="P50491"/>
<dbReference type="SMR" id="P50491"/>
<dbReference type="GlyCosmos" id="P50491">
    <property type="glycosylation" value="5 sites, No reported glycans"/>
</dbReference>
<dbReference type="GO" id="GO:0016020">
    <property type="term" value="C:membrane"/>
    <property type="evidence" value="ECO:0007669"/>
    <property type="project" value="UniProtKB-SubCell"/>
</dbReference>
<dbReference type="FunFam" id="4.10.1010.10:FF:000001">
    <property type="entry name" value="Apical membrane antigen 1"/>
    <property type="match status" value="1"/>
</dbReference>
<dbReference type="Gene3D" id="6.10.250.430">
    <property type="match status" value="1"/>
</dbReference>
<dbReference type="Gene3D" id="4.10.1010.10">
    <property type="entry name" value="Apical membrane antigen 1"/>
    <property type="match status" value="1"/>
</dbReference>
<dbReference type="Gene3D" id="3.50.4.10">
    <property type="entry name" value="Hepatocyte Growth Factor"/>
    <property type="match status" value="2"/>
</dbReference>
<dbReference type="InterPro" id="IPR003298">
    <property type="entry name" value="Apmem_Ag1"/>
</dbReference>
<dbReference type="InterPro" id="IPR024056">
    <property type="entry name" value="Apmem_Ag1_dom_sf"/>
</dbReference>
<dbReference type="Pfam" id="PF02430">
    <property type="entry name" value="AMA-1"/>
    <property type="match status" value="1"/>
</dbReference>
<dbReference type="PRINTS" id="PR01361">
    <property type="entry name" value="MEROZOITESA"/>
</dbReference>
<dbReference type="SMART" id="SM00815">
    <property type="entry name" value="AMA-1"/>
    <property type="match status" value="1"/>
</dbReference>
<dbReference type="SUPFAM" id="SSF82910">
    <property type="entry name" value="Apical membrane antigen 1"/>
    <property type="match status" value="1"/>
</dbReference>
<feature type="signal peptide" evidence="2">
    <location>
        <begin position="1"/>
        <end position="24"/>
    </location>
</feature>
<feature type="chain" id="PRO_0000024613" description="Apical membrane antigen 1">
    <location>
        <begin position="25"/>
        <end position="622"/>
    </location>
</feature>
<feature type="topological domain" description="Extracellular" evidence="2">
    <location>
        <begin position="25"/>
        <end position="546"/>
    </location>
</feature>
<feature type="transmembrane region" description="Helical" evidence="2">
    <location>
        <begin position="547"/>
        <end position="567"/>
    </location>
</feature>
<feature type="topological domain" description="Cytoplasmic" evidence="2">
    <location>
        <begin position="568"/>
        <end position="622"/>
    </location>
</feature>
<feature type="region of interest" description="Disordered" evidence="3">
    <location>
        <begin position="577"/>
        <end position="607"/>
    </location>
</feature>
<feature type="glycosylation site" description="N-linked (GlcNAc...) asparagine" evidence="2">
    <location>
        <position position="286"/>
    </location>
</feature>
<feature type="glycosylation site" description="N-linked (GlcNAc...) asparagine" evidence="2">
    <location>
        <position position="371"/>
    </location>
</feature>
<feature type="glycosylation site" description="N-linked (GlcNAc...) asparagine" evidence="2">
    <location>
        <position position="421"/>
    </location>
</feature>
<feature type="glycosylation site" description="N-linked (GlcNAc...) asparagine" evidence="2">
    <location>
        <position position="422"/>
    </location>
</feature>
<feature type="glycosylation site" description="N-linked (GlcNAc...) asparagine" evidence="2">
    <location>
        <position position="499"/>
    </location>
</feature>
<feature type="disulfide bond" evidence="1">
    <location>
        <begin position="149"/>
        <end position="302"/>
    </location>
</feature>
<feature type="disulfide bond" evidence="1">
    <location>
        <begin position="217"/>
        <end position="247"/>
    </location>
</feature>
<feature type="disulfide bond" evidence="1">
    <location>
        <begin position="263"/>
        <end position="275"/>
    </location>
</feature>
<feature type="disulfide bond" evidence="1">
    <location>
        <begin position="320"/>
        <end position="418"/>
    </location>
</feature>
<feature type="disulfide bond" evidence="1">
    <location>
        <begin position="337"/>
        <end position="409"/>
    </location>
</feature>
<feature type="disulfide bond" evidence="1">
    <location>
        <begin position="443"/>
        <end position="502"/>
    </location>
</feature>
<feature type="disulfide bond" evidence="1">
    <location>
        <begin position="490"/>
        <end position="507"/>
    </location>
</feature>
<feature type="disulfide bond" evidence="1">
    <location>
        <begin position="492"/>
        <end position="509"/>
    </location>
</feature>
<sequence length="622" mass="71989">MRKLYCVLLLSAFEFTYMINFGRGQNYWEHPYQNSDVYRPINEHREHPKEYEYPLLQEHTYQQEDSGEDENTLQHAYPIDHEGAEPAPQEQNLFSSIEIVERSNYMGNPWTEYMAKYDIEKVHGSGIRVDLGEDAEVAGTQYRLPSGKCPVFGKGIIIENSKTTFLTPVATENQDLKDGGFAFPPTEPLISPMTLDQMRHLYKDNEYVKNLDELTLCSRHAGNMNPDNDKNSNYKYPAVYDYEDKKCHILYIAAQENNGPRYCNKDESKRNSMFCFRPAKDKLFENYTYLSKNVVDNWEEVCPRKNLENAKFGLWVDGNCEDIPHVNEFSANDLFECNKLVFELSASDQPKQYEQHLTDYEKIKEGFKNKNASMIKSAFLPTGAFKADRYKSRGKGYNWGNYNTETQKCEIFNVKPTCLINNSSYIATTALSHPNEVENNFPCSLYKDEIKKEIERESKRIKLNDNDDEGNKKIIAPRIFISDDKDSLKCPCDPEIVSNSTCNFFVCKCVEKRAEVTSNNEVVVKEEYKDEYADIPEHKPTYDNMKIIIASSAAVAVLATILMVYLYKRKGNAEKYDKMDEPQDYGKSTSRNDEMLDPEASFWGEEKRASHTTPVLMEKPYY</sequence>
<name>AMA1_PLAFH</name>
<gene>
    <name type="primary">AMA-1</name>
    <name type="synonym">PF83</name>
</gene>
<protein>
    <recommendedName>
        <fullName>Apical membrane antigen 1</fullName>
    </recommendedName>
    <alternativeName>
        <fullName>Merozoite surface antigen</fullName>
    </alternativeName>
</protein>
<organism>
    <name type="scientific">Plasmodium falciparum (isolate thtn / Thailand)</name>
    <dbReference type="NCBI Taxonomy" id="70151"/>
    <lineage>
        <taxon>Eukaryota</taxon>
        <taxon>Sar</taxon>
        <taxon>Alveolata</taxon>
        <taxon>Apicomplexa</taxon>
        <taxon>Aconoidasida</taxon>
        <taxon>Haemosporida</taxon>
        <taxon>Plasmodiidae</taxon>
        <taxon>Plasmodium</taxon>
        <taxon>Plasmodium (Laverania)</taxon>
    </lineage>
</organism>
<reference key="1">
    <citation type="journal article" date="1990" name="Mol. Biochem. Parasitol.">
        <title>Analysis of variation in PF83, an erythrocytic merozoite vaccine candidate antigen of Plasmodium falciparum.</title>
        <authorList>
            <person name="Thomas A.W."/>
            <person name="Waters A.P."/>
            <person name="Carr D."/>
        </authorList>
    </citation>
    <scope>NUCLEOTIDE SEQUENCE [GENOMIC DNA]</scope>
</reference>
<accession>P50491</accession>
<proteinExistence type="inferred from homology"/>
<keyword id="KW-1015">Disulfide bond</keyword>
<keyword id="KW-0325">Glycoprotein</keyword>
<keyword id="KW-0461">Malaria</keyword>
<keyword id="KW-0472">Membrane</keyword>
<keyword id="KW-0732">Signal</keyword>
<keyword id="KW-0812">Transmembrane</keyword>
<keyword id="KW-1133">Transmembrane helix</keyword>
<comment type="function">
    <text>Involved in parasite invasion of erythrocytes.</text>
</comment>
<comment type="subcellular location">
    <subcellularLocation>
        <location>Membrane</location>
        <topology>Single-pass type I membrane protein</topology>
    </subcellularLocation>
</comment>
<comment type="similarity">
    <text evidence="4">Belongs to the apicomplexan parasites AMA1 family.</text>
</comment>